<dbReference type="EC" id="3.2.1.206" evidence="6"/>
<dbReference type="EMBL" id="AY083162">
    <property type="protein sequence ID" value="AAL93619.1"/>
    <property type="molecule type" value="mRNA"/>
</dbReference>
<dbReference type="EMBL" id="KF623043">
    <property type="protein sequence ID" value="AHB37683.1"/>
    <property type="molecule type" value="Genomic_DNA"/>
</dbReference>
<dbReference type="SMR" id="Q8GVD0"/>
<dbReference type="CAZy" id="GH1">
    <property type="family name" value="Glycoside Hydrolase Family 1"/>
</dbReference>
<dbReference type="KEGG" id="ag:AAL93619"/>
<dbReference type="BRENDA" id="3.2.1.206">
    <property type="organism ID" value="4398"/>
</dbReference>
<dbReference type="SABIO-RK" id="Q8GVD0"/>
<dbReference type="GO" id="GO:0005634">
    <property type="term" value="C:nucleus"/>
    <property type="evidence" value="ECO:0000314"/>
    <property type="project" value="UniProtKB"/>
</dbReference>
<dbReference type="GO" id="GO:0008422">
    <property type="term" value="F:beta-glucosidase activity"/>
    <property type="evidence" value="ECO:0000314"/>
    <property type="project" value="UniProtKB"/>
</dbReference>
<dbReference type="GO" id="GO:0005975">
    <property type="term" value="P:carbohydrate metabolic process"/>
    <property type="evidence" value="ECO:0007669"/>
    <property type="project" value="InterPro"/>
</dbReference>
<dbReference type="GO" id="GO:0006952">
    <property type="term" value="P:defense response"/>
    <property type="evidence" value="ECO:0007669"/>
    <property type="project" value="UniProtKB-KW"/>
</dbReference>
<dbReference type="GO" id="GO:0051259">
    <property type="term" value="P:protein complex oligomerization"/>
    <property type="evidence" value="ECO:0000314"/>
    <property type="project" value="UniProtKB"/>
</dbReference>
<dbReference type="FunFam" id="3.20.20.80:FF:000041">
    <property type="entry name" value="Beta-glucosidase 7"/>
    <property type="match status" value="1"/>
</dbReference>
<dbReference type="Gene3D" id="3.20.20.80">
    <property type="entry name" value="Glycosidases"/>
    <property type="match status" value="1"/>
</dbReference>
<dbReference type="InterPro" id="IPR001360">
    <property type="entry name" value="Glyco_hydro_1"/>
</dbReference>
<dbReference type="InterPro" id="IPR033132">
    <property type="entry name" value="Glyco_hydro_1_N_CS"/>
</dbReference>
<dbReference type="InterPro" id="IPR017853">
    <property type="entry name" value="Glycoside_hydrolase_SF"/>
</dbReference>
<dbReference type="PANTHER" id="PTHR10353">
    <property type="entry name" value="GLYCOSYL HYDROLASE"/>
    <property type="match status" value="1"/>
</dbReference>
<dbReference type="PANTHER" id="PTHR10353:SF137">
    <property type="entry name" value="MYROSINASE 3-RELATED"/>
    <property type="match status" value="1"/>
</dbReference>
<dbReference type="Pfam" id="PF00232">
    <property type="entry name" value="Glyco_hydro_1"/>
    <property type="match status" value="1"/>
</dbReference>
<dbReference type="PRINTS" id="PR00131">
    <property type="entry name" value="GLHYDRLASE1"/>
</dbReference>
<dbReference type="SUPFAM" id="SSF51445">
    <property type="entry name" value="(Trans)glycosidases"/>
    <property type="match status" value="1"/>
</dbReference>
<dbReference type="PROSITE" id="PS00653">
    <property type="entry name" value="GLYCOSYL_HYDROL_F1_2"/>
    <property type="match status" value="1"/>
</dbReference>
<organism>
    <name type="scientific">Olea europaea</name>
    <name type="common">Common olive</name>
    <dbReference type="NCBI Taxonomy" id="4146"/>
    <lineage>
        <taxon>Eukaryota</taxon>
        <taxon>Viridiplantae</taxon>
        <taxon>Streptophyta</taxon>
        <taxon>Embryophyta</taxon>
        <taxon>Tracheophyta</taxon>
        <taxon>Spermatophyta</taxon>
        <taxon>Magnoliopsida</taxon>
        <taxon>eudicotyledons</taxon>
        <taxon>Gunneridae</taxon>
        <taxon>Pentapetalae</taxon>
        <taxon>asterids</taxon>
        <taxon>lamiids</taxon>
        <taxon>Lamiales</taxon>
        <taxon>Oleaceae</taxon>
        <taxon>Oleeae</taxon>
        <taxon>Olea</taxon>
    </lineage>
</organism>
<name>BGLC_OLEEU</name>
<evidence type="ECO:0000250" key="1">
    <source>
        <dbReference type="UniProtKB" id="Q1XH05"/>
    </source>
</evidence>
<evidence type="ECO:0000250" key="2">
    <source>
        <dbReference type="UniProtKB" id="Q7XSK0"/>
    </source>
</evidence>
<evidence type="ECO:0000250" key="3">
    <source>
        <dbReference type="UniProtKB" id="Q9SPP9"/>
    </source>
</evidence>
<evidence type="ECO:0000255" key="4">
    <source>
        <dbReference type="RuleBase" id="RU003690"/>
    </source>
</evidence>
<evidence type="ECO:0000256" key="5">
    <source>
        <dbReference type="SAM" id="MobiDB-lite"/>
    </source>
</evidence>
<evidence type="ECO:0000269" key="6">
    <source>
    </source>
</evidence>
<evidence type="ECO:0000269" key="7">
    <source>
    </source>
</evidence>
<evidence type="ECO:0000303" key="8">
    <source>
    </source>
</evidence>
<evidence type="ECO:0000303" key="9">
    <source ref="1"/>
</evidence>
<evidence type="ECO:0000305" key="10"/>
<accession>Q8GVD0</accession>
<accession>V5RMD5</accession>
<reference key="1">
    <citation type="submission" date="2002-03" db="EMBL/GenBank/DDBJ databases">
        <authorList>
            <person name="Gazis F."/>
            <person name="Hatzopoulos P."/>
        </authorList>
    </citation>
    <scope>NUCLEOTIDE SEQUENCE [MRNA]</scope>
    <source>
        <strain>cv. Koroneiki</strain>
    </source>
</reference>
<reference key="2">
    <citation type="submission" date="2013-09" db="EMBL/GenBank/DDBJ databases">
        <title>Full length nucleotide sequence of Olea europaea cv Ayvalik beta glucosidase gene.</title>
        <authorList>
            <person name="Deniz Sonmez G."/>
            <person name="Dundar E."/>
        </authorList>
    </citation>
    <scope>NUCLEOTIDE SEQUENCE [GENOMIC DNA]</scope>
    <source>
        <strain>cv. Ayvalik</strain>
    </source>
</reference>
<reference key="3">
    <citation type="journal article" date="2015" name="J. Exp. Bot.">
        <title>A defence-related Olea europaea beta-glucosidase hydrolyses and activates oleuropein into a potent protein cross-linking agent.</title>
        <authorList>
            <person name="Koudounas K."/>
            <person name="Banilas G."/>
            <person name="Michaelidis C."/>
            <person name="Demoliou C."/>
            <person name="Rigas S."/>
            <person name="Hatzopoulos P."/>
        </authorList>
    </citation>
    <scope>FUNCTION</scope>
    <scope>CATALYTIC ACTIVITY</scope>
    <scope>3D-STRUCTURE MODELING</scope>
    <scope>TISSUE SPECIFICITY</scope>
    <scope>DEVELOPMENTAL STAGE</scope>
    <scope>SUBUNIT</scope>
</reference>
<reference key="4">
    <citation type="journal article" date="2017" name="Plant Physiol.">
        <title>The C-domain of oleuropein beta-glucosidase assists in protein folding and sequesters the enzyme in nucleus.</title>
        <authorList>
            <person name="Koudounas K."/>
            <person name="Thomopoulou M."/>
            <person name="Michaelidis C."/>
            <person name="Zevgiti E."/>
            <person name="Papakostas G."/>
            <person name="Tserou P."/>
            <person name="Daras G."/>
            <person name="Hatzopoulos P."/>
        </authorList>
    </citation>
    <scope>BIOPHYSICOCHEMICAL PROPERTIES</scope>
    <scope>SUBCELLULAR LOCATION</scope>
    <scope>MUTAGENESIS OF 543-LYS--THR-551</scope>
    <scope>SUBUNIT</scope>
    <scope>FUNCTION</scope>
</reference>
<comment type="function">
    <text evidence="6 7">Major beta-glucosidase activating oleuropein into a potent protein cross-linking agent (PubMed:25697790, PubMed:28483880). No activity with rutin, luteolin or p-nitrophenyl-beta-glucopyranoside as substrates (PubMed:25697790).</text>
</comment>
<comment type="catalytic activity">
    <reaction evidence="6">
        <text>oleuropein + H2O = oleuropein aglycone + D-glucose</text>
        <dbReference type="Rhea" id="RHEA:55740"/>
        <dbReference type="ChEBI" id="CHEBI:4167"/>
        <dbReference type="ChEBI" id="CHEBI:7747"/>
        <dbReference type="ChEBI" id="CHEBI:15377"/>
        <dbReference type="ChEBI" id="CHEBI:139162"/>
        <dbReference type="EC" id="3.2.1.206"/>
    </reaction>
</comment>
<comment type="biophysicochemical properties">
    <kinetics>
        <KM evidence="7">2.48 mM for oleuropein</KM>
    </kinetics>
    <phDependence>
        <text evidence="7">Optimum pH is 5.5.</text>
    </phDependence>
    <temperatureDependence>
        <text evidence="7">Optimum temperature is 37 degrees Celsius.</text>
    </temperatureDependence>
</comment>
<comment type="subunit">
    <text evidence="7">Homomultimer. Native form of the enzyme requires at least an octamer conformation.</text>
</comment>
<comment type="subcellular location">
    <subcellularLocation>
        <location evidence="7">Nucleus</location>
    </subcellularLocation>
    <text evidence="7">Distinctive compartmentalization of the oleuropein/OeGLU dual partner is a requisite to ensure a correct defense system response and to prevent the autotoxicity.</text>
</comment>
<comment type="tissue specificity">
    <text evidence="6">Expressed in expanding leaves and in young drupes, mostly in the developing seed coat tissues, the perisperm and the mesocarp. Also detected in shoot and root meristems, flower buds, developing ovaries and tapetal cells of the anther. Not detected in embryos or endosperm, or in leaf trichomes.</text>
</comment>
<comment type="developmental stage">
    <text evidence="6">Expressed in the developing mesocarp from 13 weeks after flowering until veraison, when the color of drupes turned from green to black.</text>
</comment>
<comment type="similarity">
    <text evidence="4">Belongs to the glycosyl hydrolase 1 family.</text>
</comment>
<keyword id="KW-0326">Glycosidase</keyword>
<keyword id="KW-0378">Hydrolase</keyword>
<keyword id="KW-0539">Nucleus</keyword>
<keyword id="KW-0611">Plant defense</keyword>
<protein>
    <recommendedName>
        <fullName evidence="10">Oleuropein beta-glucosidase</fullName>
        <ecNumber evidence="6">3.2.1.206</ecNumber>
    </recommendedName>
    <alternativeName>
        <fullName evidence="8">Beta-glucosidase</fullName>
        <shortName evidence="8">OeGLU</shortName>
    </alternativeName>
</protein>
<gene>
    <name evidence="8" type="primary">GLU</name>
    <name evidence="9" type="synonym">BGLC</name>
</gene>
<feature type="chain" id="PRO_0000433019" description="Oleuropein beta-glucosidase">
    <location>
        <begin position="1"/>
        <end position="551"/>
    </location>
</feature>
<feature type="region of interest" description="Disordered" evidence="5">
    <location>
        <begin position="1"/>
        <end position="33"/>
    </location>
</feature>
<feature type="region of interest" description="Required for the homomultimerization" evidence="7">
    <location>
        <begin position="502"/>
        <end position="551"/>
    </location>
</feature>
<feature type="region of interest" description="Disordered" evidence="5">
    <location>
        <begin position="532"/>
        <end position="551"/>
    </location>
</feature>
<feature type="short sequence motif" description="Nuclear localization signal" evidence="7">
    <location>
        <begin position="542"/>
        <end position="550"/>
    </location>
</feature>
<feature type="compositionally biased region" description="Polar residues" evidence="5">
    <location>
        <begin position="1"/>
        <end position="27"/>
    </location>
</feature>
<feature type="compositionally biased region" description="Basic and acidic residues" evidence="5">
    <location>
        <begin position="535"/>
        <end position="544"/>
    </location>
</feature>
<feature type="active site" description="Proton donor" evidence="3">
    <location>
        <position position="202"/>
    </location>
</feature>
<feature type="active site" description="Nucleophile" evidence="3">
    <location>
        <position position="433"/>
    </location>
</feature>
<feature type="binding site" evidence="2">
    <location>
        <position position="52"/>
    </location>
    <ligand>
        <name>a beta-D-glucoside</name>
        <dbReference type="ChEBI" id="CHEBI:22798"/>
    </ligand>
</feature>
<feature type="binding site" evidence="2">
    <location>
        <position position="156"/>
    </location>
    <ligand>
        <name>a beta-D-glucoside</name>
        <dbReference type="ChEBI" id="CHEBI:22798"/>
    </ligand>
</feature>
<feature type="binding site" evidence="2">
    <location>
        <begin position="201"/>
        <end position="202"/>
    </location>
    <ligand>
        <name>a beta-D-glucoside</name>
        <dbReference type="ChEBI" id="CHEBI:22798"/>
    </ligand>
</feature>
<feature type="binding site" evidence="2">
    <location>
        <position position="363"/>
    </location>
    <ligand>
        <name>a beta-D-glucoside</name>
        <dbReference type="ChEBI" id="CHEBI:22798"/>
    </ligand>
</feature>
<feature type="binding site" evidence="3">
    <location>
        <position position="433"/>
    </location>
    <ligand>
        <name>a beta-D-glucoside</name>
        <dbReference type="ChEBI" id="CHEBI:22798"/>
    </ligand>
</feature>
<feature type="binding site" evidence="2">
    <location>
        <position position="482"/>
    </location>
    <ligand>
        <name>a beta-D-glucoside</name>
        <dbReference type="ChEBI" id="CHEBI:22798"/>
    </ligand>
</feature>
<feature type="binding site" evidence="2">
    <location>
        <begin position="489"/>
        <end position="490"/>
    </location>
    <ligand>
        <name>a beta-D-glucoside</name>
        <dbReference type="ChEBI" id="CHEBI:22798"/>
    </ligand>
</feature>
<feature type="binding site" evidence="1">
    <location>
        <position position="498"/>
    </location>
    <ligand>
        <name>a beta-D-glucoside</name>
        <dbReference type="ChEBI" id="CHEBI:22798"/>
    </ligand>
</feature>
<feature type="site" description="Controls the gate shape and acceptance of substrates" evidence="3">
    <location>
        <position position="405"/>
    </location>
</feature>
<feature type="mutagenesis site" description="Delocalization from the nucleus to the cytoplasm." evidence="7">
    <location>
        <begin position="543"/>
        <end position="551"/>
    </location>
</feature>
<proteinExistence type="evidence at protein level"/>
<sequence length="551" mass="62894">MDIQSNVLTITSGSTPTDTSSNGQAAKSTKERIKRSDFPSDFVFGAATASYQVEGAWNEGGKGMSNWDYFTQSQPGGISDFSNGTIAIDHYNMFKDDVVVMKKLGLKAYRFSLSWPRILPGGRLCHGVSKEGVQFYNDLIDALLAADIEPYITIFHWDIPQCLQLEYGGFLHERVVKDFIEYSEICFWEFGDRVKYWITLNEPWSFTVQGYVAGAFPPNRGVTPKDTEETQKHARLHRGGGKLLAAFKYGNPGTEPYKVAHNLILCHAHAVDIYRTKYQESQGGKIGITNCISWNEPLTDSQEDKDAATRGNDFMLGWFVEPVVTGEYPESMIKYVGDRLPKFSEKEEKLVKGSYDFLGINYYTSTYTSDDPTKPTTDSYFTDSHTKTSHERNKVPIGAQAGSDWLYIVPWGIYRVMVDMKKRYNDPVIYITENGVDEVNDKSKTSTEALKDDIRIHYHQEHLYYLKLAMDQGVNVKGYFIWSLFDNFEWAAGFSVRFGVMYVDYANGRYTRLPKRSAVWWRNFLTKPTAVPLKNEPEKSEDRRKRLRGST</sequence>